<sequence>MGKIIGIDLGTTNSCVAVLDGDKPRVIENAEGERTTPSVIAYTDGETLVGQPAKRQAVTNPQNTLFAIKRLIGRRFEDEEVQRDIKIMPYKIVKADNGDAWVEAKGQKMAAPQVSAEVLKKMKKTAEDFLGEPVTAAVITVPAYFNDAQRQATKDAGRIAGLEVKRIINEPTAAALAYGLDKQGGDRTIAVYDLGGGTFDISIIEIDEVEGEKTFEVLSTNGDTHLGGEDFDNRMINYLVDEFKKDQGIDLRNDPLAMQRLKEAAEKAKIELSSAQQTDVNLPYITADATGPKHMNIKVTRAKLEALVEDLVQRSLEPLKVALADADLSVNDITDVILVGGQTRMPMVQKKVAEFFGKEPRKDVNPDEAVAVGAAVQGGVLAGEVKDVLLLDVTPLSLGIETMGGVMTKLIEKNTTIPTKANQVFSTAEDNQSAVTIHVLQGERKQAMYNKSLGQFNLEGINPAPRGMPQIEVIFDLDADGILHVSAKDKQTGKEQKITIQASGGLSDAEIEKMVQEAEANKEADKKFEELATARNQADQMIHATRKQITEAGEALPADEKAKIETAINELETAKKGEDKAEIDAKVQALMAAAQKLMEIAQQQAQAQGANAGQSSAKEDDVVDAEFEEVNDDKK</sequence>
<organism>
    <name type="scientific">Vibrio cholerae serotype O1 (strain ATCC 39315 / El Tor Inaba N16961)</name>
    <dbReference type="NCBI Taxonomy" id="243277"/>
    <lineage>
        <taxon>Bacteria</taxon>
        <taxon>Pseudomonadati</taxon>
        <taxon>Pseudomonadota</taxon>
        <taxon>Gammaproteobacteria</taxon>
        <taxon>Vibrionales</taxon>
        <taxon>Vibrionaceae</taxon>
        <taxon>Vibrio</taxon>
    </lineage>
</organism>
<feature type="chain" id="PRO_0000078581" description="Chaperone protein DnaK">
    <location>
        <begin position="1"/>
        <end position="635"/>
    </location>
</feature>
<feature type="region of interest" description="Disordered" evidence="2">
    <location>
        <begin position="601"/>
        <end position="635"/>
    </location>
</feature>
<feature type="compositionally biased region" description="Low complexity" evidence="2">
    <location>
        <begin position="601"/>
        <end position="616"/>
    </location>
</feature>
<feature type="compositionally biased region" description="Acidic residues" evidence="2">
    <location>
        <begin position="621"/>
        <end position="635"/>
    </location>
</feature>
<feature type="modified residue" description="Phosphothreonine; by autocatalysis" evidence="1">
    <location>
        <position position="198"/>
    </location>
</feature>
<feature type="sequence conflict" description="In Ref. 1; CAA74627." evidence="3" ref="1">
    <original>ET</original>
    <variation>VS</variation>
    <location>
        <begin position="46"/>
        <end position="47"/>
    </location>
</feature>
<feature type="sequence conflict" description="In Ref. 1; CAA74627." evidence="3" ref="1">
    <original>Q</original>
    <variation>P</variation>
    <location>
        <position position="151"/>
    </location>
</feature>
<feature type="sequence conflict" description="In Ref. 1; CAA74627." evidence="3" ref="1">
    <original>G</original>
    <variation>C</variation>
    <location>
        <position position="157"/>
    </location>
</feature>
<feature type="sequence conflict" description="In Ref. 1; CAA74627." evidence="3" ref="1">
    <original>Q</original>
    <variation>P</variation>
    <location>
        <position position="183"/>
    </location>
</feature>
<feature type="sequence conflict" description="In Ref. 1; CAA74627." evidence="3" ref="1">
    <original>Y</original>
    <variation>H</variation>
    <location>
        <position position="238"/>
    </location>
</feature>
<feature type="sequence conflict" description="In Ref. 1; CAA74627." evidence="3" ref="1">
    <original>D</original>
    <variation>E</variation>
    <location>
        <position position="367"/>
    </location>
</feature>
<feature type="sequence conflict" description="In Ref. 1; CAA74627." evidence="3" ref="1">
    <original>L</original>
    <variation>Q</variation>
    <location>
        <position position="391"/>
    </location>
</feature>
<feature type="sequence conflict" description="In Ref. 1; CAA74627." evidence="3" ref="1">
    <original>PLS</original>
    <variation>LLF</variation>
    <location>
        <begin position="395"/>
        <end position="397"/>
    </location>
</feature>
<feature type="sequence conflict" description="In Ref. 1; CAA74627." evidence="3" ref="1">
    <original>L</original>
    <variation>F</variation>
    <location>
        <position position="410"/>
    </location>
</feature>
<feature type="sequence conflict" description="In Ref. 1; CAA74627." evidence="3" ref="1">
    <original>A</original>
    <variation>R</variation>
    <location>
        <position position="555"/>
    </location>
</feature>
<name>DNAK_VIBCH</name>
<protein>
    <recommendedName>
        <fullName>Chaperone protein DnaK</fullName>
    </recommendedName>
    <alternativeName>
        <fullName>HSP70</fullName>
    </alternativeName>
    <alternativeName>
        <fullName>Heat shock 70 kDa protein</fullName>
    </alternativeName>
    <alternativeName>
        <fullName>Heat shock protein 70</fullName>
    </alternativeName>
</protein>
<evidence type="ECO:0000250" key="1"/>
<evidence type="ECO:0000256" key="2">
    <source>
        <dbReference type="SAM" id="MobiDB-lite"/>
    </source>
</evidence>
<evidence type="ECO:0000305" key="3"/>
<comment type="function">
    <text evidence="1">Acts as a chaperone.</text>
</comment>
<comment type="induction">
    <text evidence="1">By stress conditions e.g. heat shock (By similarity).</text>
</comment>
<comment type="similarity">
    <text evidence="3">Belongs to the heat shock protein 70 family.</text>
</comment>
<gene>
    <name type="primary">dnaK</name>
    <name type="ordered locus">VC_0855</name>
</gene>
<proteinExistence type="inferred from homology"/>
<accession>O34241</accession>
<accession>Q9KTP6</accession>
<dbReference type="EMBL" id="Y14237">
    <property type="protein sequence ID" value="CAA74627.1"/>
    <property type="molecule type" value="Genomic_DNA"/>
</dbReference>
<dbReference type="EMBL" id="AE003852">
    <property type="protein sequence ID" value="AAF94017.1"/>
    <property type="molecule type" value="Genomic_DNA"/>
</dbReference>
<dbReference type="PIR" id="B82273">
    <property type="entry name" value="B82273"/>
</dbReference>
<dbReference type="RefSeq" id="NP_230502.1">
    <property type="nucleotide sequence ID" value="NC_002505.1"/>
</dbReference>
<dbReference type="RefSeq" id="WP_000516147.1">
    <property type="nucleotide sequence ID" value="NZ_LT906614.1"/>
</dbReference>
<dbReference type="SMR" id="O34241"/>
<dbReference type="STRING" id="243277.VC_0855"/>
<dbReference type="DNASU" id="2614522"/>
<dbReference type="EnsemblBacteria" id="AAF94017">
    <property type="protein sequence ID" value="AAF94017"/>
    <property type="gene ID" value="VC_0855"/>
</dbReference>
<dbReference type="KEGG" id="vch:VC_0855"/>
<dbReference type="PATRIC" id="fig|243277.26.peg.816"/>
<dbReference type="eggNOG" id="COG0443">
    <property type="taxonomic scope" value="Bacteria"/>
</dbReference>
<dbReference type="HOGENOM" id="CLU_005965_2_1_6"/>
<dbReference type="Proteomes" id="UP000000584">
    <property type="component" value="Chromosome 1"/>
</dbReference>
<dbReference type="GO" id="GO:0005829">
    <property type="term" value="C:cytosol"/>
    <property type="evidence" value="ECO:0000318"/>
    <property type="project" value="GO_Central"/>
</dbReference>
<dbReference type="GO" id="GO:0005524">
    <property type="term" value="F:ATP binding"/>
    <property type="evidence" value="ECO:0007669"/>
    <property type="project" value="UniProtKB-UniRule"/>
</dbReference>
<dbReference type="GO" id="GO:0016887">
    <property type="term" value="F:ATP hydrolysis activity"/>
    <property type="evidence" value="ECO:0000318"/>
    <property type="project" value="GO_Central"/>
</dbReference>
<dbReference type="GO" id="GO:0140662">
    <property type="term" value="F:ATP-dependent protein folding chaperone"/>
    <property type="evidence" value="ECO:0007669"/>
    <property type="project" value="InterPro"/>
</dbReference>
<dbReference type="GO" id="GO:0031072">
    <property type="term" value="F:heat shock protein binding"/>
    <property type="evidence" value="ECO:0000318"/>
    <property type="project" value="GO_Central"/>
</dbReference>
<dbReference type="GO" id="GO:0044183">
    <property type="term" value="F:protein folding chaperone"/>
    <property type="evidence" value="ECO:0000318"/>
    <property type="project" value="GO_Central"/>
</dbReference>
<dbReference type="GO" id="GO:0051082">
    <property type="term" value="F:unfolded protein binding"/>
    <property type="evidence" value="ECO:0007669"/>
    <property type="project" value="InterPro"/>
</dbReference>
<dbReference type="GO" id="GO:0051085">
    <property type="term" value="P:chaperone cofactor-dependent protein refolding"/>
    <property type="evidence" value="ECO:0000318"/>
    <property type="project" value="GO_Central"/>
</dbReference>
<dbReference type="GO" id="GO:0042026">
    <property type="term" value="P:protein refolding"/>
    <property type="evidence" value="ECO:0000318"/>
    <property type="project" value="GO_Central"/>
</dbReference>
<dbReference type="CDD" id="cd10234">
    <property type="entry name" value="ASKHA_NBD_HSP70_DnaK-like"/>
    <property type="match status" value="1"/>
</dbReference>
<dbReference type="FunFam" id="2.60.34.10:FF:000014">
    <property type="entry name" value="Chaperone protein DnaK HSP70"/>
    <property type="match status" value="1"/>
</dbReference>
<dbReference type="FunFam" id="3.30.30.30:FF:000003">
    <property type="entry name" value="Heat shock protein 9"/>
    <property type="match status" value="1"/>
</dbReference>
<dbReference type="FunFam" id="1.20.1270.10:FF:000001">
    <property type="entry name" value="Molecular chaperone DnaK"/>
    <property type="match status" value="1"/>
</dbReference>
<dbReference type="FunFam" id="3.30.420.40:FF:000004">
    <property type="entry name" value="Molecular chaperone DnaK"/>
    <property type="match status" value="1"/>
</dbReference>
<dbReference type="FunFam" id="3.90.640.10:FF:000003">
    <property type="entry name" value="Molecular chaperone DnaK"/>
    <property type="match status" value="1"/>
</dbReference>
<dbReference type="Gene3D" id="1.20.1270.10">
    <property type="match status" value="1"/>
</dbReference>
<dbReference type="Gene3D" id="3.30.420.40">
    <property type="match status" value="2"/>
</dbReference>
<dbReference type="Gene3D" id="3.90.640.10">
    <property type="entry name" value="Actin, Chain A, domain 4"/>
    <property type="match status" value="1"/>
</dbReference>
<dbReference type="Gene3D" id="2.60.34.10">
    <property type="entry name" value="Substrate Binding Domain Of DNAk, Chain A, domain 1"/>
    <property type="match status" value="1"/>
</dbReference>
<dbReference type="HAMAP" id="MF_00332">
    <property type="entry name" value="DnaK"/>
    <property type="match status" value="1"/>
</dbReference>
<dbReference type="InterPro" id="IPR043129">
    <property type="entry name" value="ATPase_NBD"/>
</dbReference>
<dbReference type="InterPro" id="IPR012725">
    <property type="entry name" value="Chaperone_DnaK"/>
</dbReference>
<dbReference type="InterPro" id="IPR018181">
    <property type="entry name" value="Heat_shock_70_CS"/>
</dbReference>
<dbReference type="InterPro" id="IPR029048">
    <property type="entry name" value="HSP70_C_sf"/>
</dbReference>
<dbReference type="InterPro" id="IPR029047">
    <property type="entry name" value="HSP70_peptide-bd_sf"/>
</dbReference>
<dbReference type="InterPro" id="IPR013126">
    <property type="entry name" value="Hsp_70_fam"/>
</dbReference>
<dbReference type="NCBIfam" id="NF001413">
    <property type="entry name" value="PRK00290.1"/>
    <property type="match status" value="1"/>
</dbReference>
<dbReference type="NCBIfam" id="NF003520">
    <property type="entry name" value="PRK05183.1"/>
    <property type="match status" value="1"/>
</dbReference>
<dbReference type="NCBIfam" id="TIGR02350">
    <property type="entry name" value="prok_dnaK"/>
    <property type="match status" value="1"/>
</dbReference>
<dbReference type="PANTHER" id="PTHR19375">
    <property type="entry name" value="HEAT SHOCK PROTEIN 70KDA"/>
    <property type="match status" value="1"/>
</dbReference>
<dbReference type="Pfam" id="PF00012">
    <property type="entry name" value="HSP70"/>
    <property type="match status" value="1"/>
</dbReference>
<dbReference type="PRINTS" id="PR00301">
    <property type="entry name" value="HEATSHOCK70"/>
</dbReference>
<dbReference type="SUPFAM" id="SSF53067">
    <property type="entry name" value="Actin-like ATPase domain"/>
    <property type="match status" value="2"/>
</dbReference>
<dbReference type="SUPFAM" id="SSF100934">
    <property type="entry name" value="Heat shock protein 70kD (HSP70), C-terminal subdomain"/>
    <property type="match status" value="1"/>
</dbReference>
<dbReference type="SUPFAM" id="SSF100920">
    <property type="entry name" value="Heat shock protein 70kD (HSP70), peptide-binding domain"/>
    <property type="match status" value="1"/>
</dbReference>
<dbReference type="PROSITE" id="PS00297">
    <property type="entry name" value="HSP70_1"/>
    <property type="match status" value="1"/>
</dbReference>
<dbReference type="PROSITE" id="PS00329">
    <property type="entry name" value="HSP70_2"/>
    <property type="match status" value="1"/>
</dbReference>
<dbReference type="PROSITE" id="PS01036">
    <property type="entry name" value="HSP70_3"/>
    <property type="match status" value="1"/>
</dbReference>
<reference key="1">
    <citation type="journal article" date="1999" name="Infect. Immun.">
        <title>Role of DnaK in in vitro and in vivo expression of virulence factors of Vibrio cholerae.</title>
        <authorList>
            <person name="Chakrabarti S."/>
            <person name="Sengupta N."/>
            <person name="Chowdhury R."/>
        </authorList>
    </citation>
    <scope>NUCLEOTIDE SEQUENCE [GENOMIC DNA]</scope>
    <source>
        <strain>ATCC 25870 / Classical Inaba 569B / Serotype O1</strain>
    </source>
</reference>
<reference key="2">
    <citation type="journal article" date="2000" name="Nature">
        <title>DNA sequence of both chromosomes of the cholera pathogen Vibrio cholerae.</title>
        <authorList>
            <person name="Heidelberg J.F."/>
            <person name="Eisen J.A."/>
            <person name="Nelson W.C."/>
            <person name="Clayton R.A."/>
            <person name="Gwinn M.L."/>
            <person name="Dodson R.J."/>
            <person name="Haft D.H."/>
            <person name="Hickey E.K."/>
            <person name="Peterson J.D."/>
            <person name="Umayam L.A."/>
            <person name="Gill S.R."/>
            <person name="Nelson K.E."/>
            <person name="Read T.D."/>
            <person name="Tettelin H."/>
            <person name="Richardson D.L."/>
            <person name="Ermolaeva M.D."/>
            <person name="Vamathevan J.J."/>
            <person name="Bass S."/>
            <person name="Qin H."/>
            <person name="Dragoi I."/>
            <person name="Sellers P."/>
            <person name="McDonald L.A."/>
            <person name="Utterback T.R."/>
            <person name="Fleischmann R.D."/>
            <person name="Nierman W.C."/>
            <person name="White O."/>
            <person name="Salzberg S.L."/>
            <person name="Smith H.O."/>
            <person name="Colwell R.R."/>
            <person name="Mekalanos J.J."/>
            <person name="Venter J.C."/>
            <person name="Fraser C.M."/>
        </authorList>
    </citation>
    <scope>NUCLEOTIDE SEQUENCE [LARGE SCALE GENOMIC DNA]</scope>
    <source>
        <strain>ATCC 39315 / El Tor Inaba N16961</strain>
    </source>
</reference>
<keyword id="KW-0067">ATP-binding</keyword>
<keyword id="KW-0143">Chaperone</keyword>
<keyword id="KW-0547">Nucleotide-binding</keyword>
<keyword id="KW-0597">Phosphoprotein</keyword>
<keyword id="KW-1185">Reference proteome</keyword>
<keyword id="KW-0346">Stress response</keyword>